<feature type="chain" id="PRO_0000280161" description="Macrolide export ATP-binding/permease protein MacB 2">
    <location>
        <begin position="1"/>
        <end position="647"/>
    </location>
</feature>
<feature type="transmembrane region" description="Helical" evidence="1">
    <location>
        <begin position="273"/>
        <end position="293"/>
    </location>
</feature>
<feature type="transmembrane region" description="Helical" evidence="1">
    <location>
        <begin position="527"/>
        <end position="547"/>
    </location>
</feature>
<feature type="transmembrane region" description="Helical" evidence="1">
    <location>
        <begin position="581"/>
        <end position="601"/>
    </location>
</feature>
<feature type="transmembrane region" description="Helical" evidence="1">
    <location>
        <begin position="610"/>
        <end position="630"/>
    </location>
</feature>
<feature type="domain" description="ABC transporter" evidence="1">
    <location>
        <begin position="6"/>
        <end position="244"/>
    </location>
</feature>
<feature type="region of interest" description="Disordered" evidence="2">
    <location>
        <begin position="223"/>
        <end position="247"/>
    </location>
</feature>
<feature type="compositionally biased region" description="Low complexity" evidence="2">
    <location>
        <begin position="230"/>
        <end position="242"/>
    </location>
</feature>
<feature type="binding site" evidence="1">
    <location>
        <begin position="42"/>
        <end position="49"/>
    </location>
    <ligand>
        <name>ATP</name>
        <dbReference type="ChEBI" id="CHEBI:30616"/>
    </ligand>
</feature>
<comment type="function">
    <text evidence="1">Part of the tripartite efflux system MacAB-TolC. MacB is a non-canonical ABC transporter that contains transmembrane domains (TMD), which form a pore in the inner membrane, and an ATP-binding domain (NBD), which is responsible for energy generation. Confers resistance against macrolides.</text>
</comment>
<comment type="subunit">
    <text evidence="1">Homodimer. Part of the tripartite efflux system MacAB-TolC, which is composed of an inner membrane transporter, MacB, a periplasmic membrane fusion protein, MacA, and an outer membrane component, TolC. The complex forms a large protein conduit and can translocate molecules across both the inner and outer membranes. Interacts with MacA.</text>
</comment>
<comment type="subcellular location">
    <subcellularLocation>
        <location evidence="1">Cell inner membrane</location>
        <topology evidence="1">Multi-pass membrane protein</topology>
    </subcellularLocation>
</comment>
<comment type="similarity">
    <text evidence="1">Belongs to the ABC transporter superfamily. Macrolide exporter (TC 3.A.1.122) family.</text>
</comment>
<proteinExistence type="inferred from homology"/>
<dbReference type="EC" id="7.6.2.-" evidence="1"/>
<dbReference type="EMBL" id="CP000462">
    <property type="protein sequence ID" value="ABK37590.1"/>
    <property type="molecule type" value="Genomic_DNA"/>
</dbReference>
<dbReference type="RefSeq" id="WP_011706788.1">
    <property type="nucleotide sequence ID" value="NC_008570.1"/>
</dbReference>
<dbReference type="RefSeq" id="YP_857494.1">
    <property type="nucleotide sequence ID" value="NC_008570.1"/>
</dbReference>
<dbReference type="SMR" id="A0KMJ3"/>
<dbReference type="STRING" id="380703.AHA_2990"/>
<dbReference type="EnsemblBacteria" id="ABK37590">
    <property type="protein sequence ID" value="ABK37590"/>
    <property type="gene ID" value="AHA_2990"/>
</dbReference>
<dbReference type="GeneID" id="4487883"/>
<dbReference type="KEGG" id="aha:AHA_2990"/>
<dbReference type="PATRIC" id="fig|380703.7.peg.2990"/>
<dbReference type="eggNOG" id="COG0577">
    <property type="taxonomic scope" value="Bacteria"/>
</dbReference>
<dbReference type="eggNOG" id="COG1136">
    <property type="taxonomic scope" value="Bacteria"/>
</dbReference>
<dbReference type="HOGENOM" id="CLU_000604_78_1_6"/>
<dbReference type="OrthoDB" id="9770036at2"/>
<dbReference type="Proteomes" id="UP000000756">
    <property type="component" value="Chromosome"/>
</dbReference>
<dbReference type="GO" id="GO:0005886">
    <property type="term" value="C:plasma membrane"/>
    <property type="evidence" value="ECO:0007669"/>
    <property type="project" value="UniProtKB-SubCell"/>
</dbReference>
<dbReference type="GO" id="GO:0005524">
    <property type="term" value="F:ATP binding"/>
    <property type="evidence" value="ECO:0007669"/>
    <property type="project" value="UniProtKB-KW"/>
</dbReference>
<dbReference type="GO" id="GO:0016887">
    <property type="term" value="F:ATP hydrolysis activity"/>
    <property type="evidence" value="ECO:0007669"/>
    <property type="project" value="InterPro"/>
</dbReference>
<dbReference type="GO" id="GO:0022857">
    <property type="term" value="F:transmembrane transporter activity"/>
    <property type="evidence" value="ECO:0007669"/>
    <property type="project" value="TreeGrafter"/>
</dbReference>
<dbReference type="GO" id="GO:0046677">
    <property type="term" value="P:response to antibiotic"/>
    <property type="evidence" value="ECO:0007669"/>
    <property type="project" value="UniProtKB-KW"/>
</dbReference>
<dbReference type="CDD" id="cd03255">
    <property type="entry name" value="ABC_MJ0796_LolCDE_FtsE"/>
    <property type="match status" value="1"/>
</dbReference>
<dbReference type="FunFam" id="3.40.50.300:FF:000032">
    <property type="entry name" value="Export ABC transporter ATP-binding protein"/>
    <property type="match status" value="1"/>
</dbReference>
<dbReference type="Gene3D" id="3.40.50.300">
    <property type="entry name" value="P-loop containing nucleotide triphosphate hydrolases"/>
    <property type="match status" value="1"/>
</dbReference>
<dbReference type="InterPro" id="IPR003593">
    <property type="entry name" value="AAA+_ATPase"/>
</dbReference>
<dbReference type="InterPro" id="IPR003838">
    <property type="entry name" value="ABC3_permease_C"/>
</dbReference>
<dbReference type="InterPro" id="IPR003439">
    <property type="entry name" value="ABC_transporter-like_ATP-bd"/>
</dbReference>
<dbReference type="InterPro" id="IPR017871">
    <property type="entry name" value="ABC_transporter-like_CS"/>
</dbReference>
<dbReference type="InterPro" id="IPR017911">
    <property type="entry name" value="MacB-like_ATP-bd"/>
</dbReference>
<dbReference type="InterPro" id="IPR025857">
    <property type="entry name" value="MacB_PCD"/>
</dbReference>
<dbReference type="InterPro" id="IPR050250">
    <property type="entry name" value="Macrolide_Exporter_MacB"/>
</dbReference>
<dbReference type="InterPro" id="IPR027417">
    <property type="entry name" value="P-loop_NTPase"/>
</dbReference>
<dbReference type="PANTHER" id="PTHR30572:SF14">
    <property type="entry name" value="MACROLIDE EXPORT ATP-BINDING_PERMEASE PROTEIN MACB"/>
    <property type="match status" value="1"/>
</dbReference>
<dbReference type="PANTHER" id="PTHR30572">
    <property type="entry name" value="MEMBRANE COMPONENT OF TRANSPORTER-RELATED"/>
    <property type="match status" value="1"/>
</dbReference>
<dbReference type="Pfam" id="PF00005">
    <property type="entry name" value="ABC_tran"/>
    <property type="match status" value="1"/>
</dbReference>
<dbReference type="Pfam" id="PF02687">
    <property type="entry name" value="FtsX"/>
    <property type="match status" value="1"/>
</dbReference>
<dbReference type="Pfam" id="PF12704">
    <property type="entry name" value="MacB_PCD"/>
    <property type="match status" value="1"/>
</dbReference>
<dbReference type="SMART" id="SM00382">
    <property type="entry name" value="AAA"/>
    <property type="match status" value="1"/>
</dbReference>
<dbReference type="SUPFAM" id="SSF52540">
    <property type="entry name" value="P-loop containing nucleoside triphosphate hydrolases"/>
    <property type="match status" value="1"/>
</dbReference>
<dbReference type="PROSITE" id="PS00211">
    <property type="entry name" value="ABC_TRANSPORTER_1"/>
    <property type="match status" value="1"/>
</dbReference>
<dbReference type="PROSITE" id="PS50893">
    <property type="entry name" value="ABC_TRANSPORTER_2"/>
    <property type="match status" value="1"/>
</dbReference>
<dbReference type="PROSITE" id="PS51267">
    <property type="entry name" value="MACB"/>
    <property type="match status" value="1"/>
</dbReference>
<reference key="1">
    <citation type="journal article" date="2006" name="J. Bacteriol.">
        <title>Genome sequence of Aeromonas hydrophila ATCC 7966T: jack of all trades.</title>
        <authorList>
            <person name="Seshadri R."/>
            <person name="Joseph S.W."/>
            <person name="Chopra A.K."/>
            <person name="Sha J."/>
            <person name="Shaw J."/>
            <person name="Graf J."/>
            <person name="Haft D.H."/>
            <person name="Wu M."/>
            <person name="Ren Q."/>
            <person name="Rosovitz M.J."/>
            <person name="Madupu R."/>
            <person name="Tallon L."/>
            <person name="Kim M."/>
            <person name="Jin S."/>
            <person name="Vuong H."/>
            <person name="Stine O.C."/>
            <person name="Ali A."/>
            <person name="Horneman A.J."/>
            <person name="Heidelberg J.F."/>
        </authorList>
    </citation>
    <scope>NUCLEOTIDE SEQUENCE [LARGE SCALE GENOMIC DNA]</scope>
    <source>
        <strain>ATCC 7966 / DSM 30187 / BCRC 13018 / CCUG 14551 / JCM 1027 / KCTC 2358 / NCIMB 9240 / NCTC 8049</strain>
    </source>
</reference>
<evidence type="ECO:0000255" key="1">
    <source>
        <dbReference type="HAMAP-Rule" id="MF_01720"/>
    </source>
</evidence>
<evidence type="ECO:0000256" key="2">
    <source>
        <dbReference type="SAM" id="MobiDB-lite"/>
    </source>
</evidence>
<protein>
    <recommendedName>
        <fullName evidence="1">Macrolide export ATP-binding/permease protein MacB 2</fullName>
        <ecNumber evidence="1">7.6.2.-</ecNumber>
    </recommendedName>
</protein>
<organism>
    <name type="scientific">Aeromonas hydrophila subsp. hydrophila (strain ATCC 7966 / DSM 30187 / BCRC 13018 / CCUG 14551 / JCM 1027 / KCTC 2358 / NCIMB 9240 / NCTC 8049)</name>
    <dbReference type="NCBI Taxonomy" id="380703"/>
    <lineage>
        <taxon>Bacteria</taxon>
        <taxon>Pseudomonadati</taxon>
        <taxon>Pseudomonadota</taxon>
        <taxon>Gammaproteobacteria</taxon>
        <taxon>Aeromonadales</taxon>
        <taxon>Aeromonadaceae</taxon>
        <taxon>Aeromonas</taxon>
    </lineage>
</organism>
<name>MACB2_AERHH</name>
<accession>A0KMJ3</accession>
<keyword id="KW-0046">Antibiotic resistance</keyword>
<keyword id="KW-0067">ATP-binding</keyword>
<keyword id="KW-0997">Cell inner membrane</keyword>
<keyword id="KW-1003">Cell membrane</keyword>
<keyword id="KW-0472">Membrane</keyword>
<keyword id="KW-0547">Nucleotide-binding</keyword>
<keyword id="KW-1185">Reference proteome</keyword>
<keyword id="KW-1278">Translocase</keyword>
<keyword id="KW-0812">Transmembrane</keyword>
<keyword id="KW-1133">Transmembrane helix</keyword>
<keyword id="KW-0813">Transport</keyword>
<sequence>MSEPLIQLKGIERRYQSGEQEVTVLHPLDLTIEAGEMIAIVGASGSGKSTLMNLLGCLDRPSSGQYLFRGQDTATLDALSLARLRCHHFGFIFQRYHLLPHLNAAANVEIPAVYAGTSRAERQARSQALLTRLGLSDRSHHTPSQLSGGQQQRVSIARALANGGEVILADEPTGALDSQSGKEVMAILKELHAQGHTIILVTHDMEVASHADRIITLKDGRVQEDSGRKPAAVPVTPTAAPAGKEGVGHDWDRYREAARMALHAMLAHRMRTFLTMLGIIIGIAAVVSVVALGQGARAKVIDQINAMGTNTIDIFPGKDWGDEKAASIQTLNKRDLDALLGQPYLEGASPQIAAPGQLRYRNKTSSGSIVGVGNDFFRVKGMKLTNGRLFDERDIQNRAAVAVVDGKTIESLLGKQDPVGQVVLVGTLPVRIIGVVEEETGFGRSSQSVNVWLPYSAVMSRLISQNHFSQLTIRVKDGVQPALAEQAAIELLTQRHGVKDFFTFSSDSIIKSVEKTTATMTLLVSAIAVISLIVGGVGVMNIMLVSVVERTREIGIRIAVGARQSDILQQFLIEAVMVSLLGGMLGVGVSLFIGLLFSLFVESIQMHFSLFSILMAFGCSSLIGILFGYLPARNAARLDPVEALARE</sequence>
<gene>
    <name evidence="1" type="primary">macB2</name>
    <name type="ordered locus">AHA_2990</name>
</gene>